<name>Y525_CHLP8</name>
<sequence>MSGHSKWATIKRKKAATDQKRGNLFTKLVKEITIAAKMGGGDPSGNPRLRLAIDTARANSMPMDNIQRAIKKGTGELEGATYEEITYEGYGPGGIAIIIETATDNRNRTVADIRHLMSRSGGSLGENGSVGWMFNRKGSIEVPKSAISEDDLMELLLDAGLEELESDDEQYYTVLTDVKDLEPVKKALEEAEIPFENAKMDMIPDNYVELDVEDARKALKLIDALENSDDAQAVYSNMDISESVMSALEEE</sequence>
<evidence type="ECO:0000255" key="1">
    <source>
        <dbReference type="HAMAP-Rule" id="MF_00693"/>
    </source>
</evidence>
<protein>
    <recommendedName>
        <fullName evidence="1">Probable transcriptional regulatory protein Cpar_0525</fullName>
    </recommendedName>
</protein>
<comment type="subcellular location">
    <subcellularLocation>
        <location evidence="1">Cytoplasm</location>
    </subcellularLocation>
</comment>
<comment type="similarity">
    <text evidence="1">Belongs to the TACO1 family.</text>
</comment>
<accession>B3QLZ4</accession>
<reference key="1">
    <citation type="submission" date="2008-06" db="EMBL/GenBank/DDBJ databases">
        <title>Complete sequence of Chlorobaculum parvum NCIB 8327.</title>
        <authorList>
            <consortium name="US DOE Joint Genome Institute"/>
            <person name="Lucas S."/>
            <person name="Copeland A."/>
            <person name="Lapidus A."/>
            <person name="Glavina del Rio T."/>
            <person name="Dalin E."/>
            <person name="Tice H."/>
            <person name="Bruce D."/>
            <person name="Goodwin L."/>
            <person name="Pitluck S."/>
            <person name="Schmutz J."/>
            <person name="Larimer F."/>
            <person name="Land M."/>
            <person name="Hauser L."/>
            <person name="Kyrpides N."/>
            <person name="Mikhailova N."/>
            <person name="Zhao F."/>
            <person name="Li T."/>
            <person name="Liu Z."/>
            <person name="Overmann J."/>
            <person name="Bryant D.A."/>
            <person name="Richardson P."/>
        </authorList>
    </citation>
    <scope>NUCLEOTIDE SEQUENCE [LARGE SCALE GENOMIC DNA]</scope>
    <source>
        <strain>DSM 263 / NCIMB 8327</strain>
    </source>
</reference>
<dbReference type="EMBL" id="CP001099">
    <property type="protein sequence ID" value="ACF10947.1"/>
    <property type="molecule type" value="Genomic_DNA"/>
</dbReference>
<dbReference type="RefSeq" id="WP_012501780.1">
    <property type="nucleotide sequence ID" value="NC_011027.1"/>
</dbReference>
<dbReference type="SMR" id="B3QLZ4"/>
<dbReference type="STRING" id="517417.Cpar_0525"/>
<dbReference type="KEGG" id="cpc:Cpar_0525"/>
<dbReference type="eggNOG" id="COG0217">
    <property type="taxonomic scope" value="Bacteria"/>
</dbReference>
<dbReference type="HOGENOM" id="CLU_062974_2_2_10"/>
<dbReference type="OrthoDB" id="9781053at2"/>
<dbReference type="Proteomes" id="UP000008811">
    <property type="component" value="Chromosome"/>
</dbReference>
<dbReference type="GO" id="GO:0005829">
    <property type="term" value="C:cytosol"/>
    <property type="evidence" value="ECO:0007669"/>
    <property type="project" value="TreeGrafter"/>
</dbReference>
<dbReference type="GO" id="GO:0003677">
    <property type="term" value="F:DNA binding"/>
    <property type="evidence" value="ECO:0007669"/>
    <property type="project" value="UniProtKB-UniRule"/>
</dbReference>
<dbReference type="GO" id="GO:0006355">
    <property type="term" value="P:regulation of DNA-templated transcription"/>
    <property type="evidence" value="ECO:0007669"/>
    <property type="project" value="UniProtKB-UniRule"/>
</dbReference>
<dbReference type="FunFam" id="1.10.10.200:FF:000002">
    <property type="entry name" value="Probable transcriptional regulatory protein CLM62_37755"/>
    <property type="match status" value="1"/>
</dbReference>
<dbReference type="Gene3D" id="1.10.10.200">
    <property type="match status" value="1"/>
</dbReference>
<dbReference type="Gene3D" id="3.30.70.980">
    <property type="match status" value="2"/>
</dbReference>
<dbReference type="HAMAP" id="MF_00693">
    <property type="entry name" value="Transcrip_reg_TACO1"/>
    <property type="match status" value="1"/>
</dbReference>
<dbReference type="InterPro" id="IPR017856">
    <property type="entry name" value="Integrase-like_N"/>
</dbReference>
<dbReference type="InterPro" id="IPR048300">
    <property type="entry name" value="TACO1_YebC-like_2nd/3rd_dom"/>
</dbReference>
<dbReference type="InterPro" id="IPR049083">
    <property type="entry name" value="TACO1_YebC_N"/>
</dbReference>
<dbReference type="InterPro" id="IPR002876">
    <property type="entry name" value="Transcrip_reg_TACO1-like"/>
</dbReference>
<dbReference type="InterPro" id="IPR026564">
    <property type="entry name" value="Transcrip_reg_TACO1-like_dom3"/>
</dbReference>
<dbReference type="InterPro" id="IPR029072">
    <property type="entry name" value="YebC-like"/>
</dbReference>
<dbReference type="NCBIfam" id="NF001030">
    <property type="entry name" value="PRK00110.1"/>
    <property type="match status" value="1"/>
</dbReference>
<dbReference type="NCBIfam" id="NF009044">
    <property type="entry name" value="PRK12378.1"/>
    <property type="match status" value="1"/>
</dbReference>
<dbReference type="NCBIfam" id="TIGR01033">
    <property type="entry name" value="YebC/PmpR family DNA-binding transcriptional regulator"/>
    <property type="match status" value="1"/>
</dbReference>
<dbReference type="PANTHER" id="PTHR12532:SF6">
    <property type="entry name" value="TRANSCRIPTIONAL REGULATORY PROTEIN YEBC-RELATED"/>
    <property type="match status" value="1"/>
</dbReference>
<dbReference type="PANTHER" id="PTHR12532">
    <property type="entry name" value="TRANSLATIONAL ACTIVATOR OF CYTOCHROME C OXIDASE 1"/>
    <property type="match status" value="1"/>
</dbReference>
<dbReference type="Pfam" id="PF20772">
    <property type="entry name" value="TACO1_YebC_N"/>
    <property type="match status" value="1"/>
</dbReference>
<dbReference type="Pfam" id="PF01709">
    <property type="entry name" value="Transcrip_reg"/>
    <property type="match status" value="1"/>
</dbReference>
<dbReference type="SUPFAM" id="SSF75625">
    <property type="entry name" value="YebC-like"/>
    <property type="match status" value="1"/>
</dbReference>
<proteinExistence type="inferred from homology"/>
<organism>
    <name type="scientific">Chlorobaculum parvum (strain DSM 263 / NCIMB 8327)</name>
    <name type="common">Chlorobium vibrioforme subsp. thiosulfatophilum</name>
    <dbReference type="NCBI Taxonomy" id="517417"/>
    <lineage>
        <taxon>Bacteria</taxon>
        <taxon>Pseudomonadati</taxon>
        <taxon>Chlorobiota</taxon>
        <taxon>Chlorobiia</taxon>
        <taxon>Chlorobiales</taxon>
        <taxon>Chlorobiaceae</taxon>
        <taxon>Chlorobaculum</taxon>
    </lineage>
</organism>
<feature type="chain" id="PRO_1000132169" description="Probable transcriptional regulatory protein Cpar_0525">
    <location>
        <begin position="1"/>
        <end position="251"/>
    </location>
</feature>
<gene>
    <name type="ordered locus">Cpar_0525</name>
</gene>
<keyword id="KW-0963">Cytoplasm</keyword>
<keyword id="KW-0238">DNA-binding</keyword>
<keyword id="KW-0804">Transcription</keyword>
<keyword id="KW-0805">Transcription regulation</keyword>